<organism>
    <name type="scientific">Danio rerio</name>
    <name type="common">Zebrafish</name>
    <name type="synonym">Brachydanio rerio</name>
    <dbReference type="NCBI Taxonomy" id="7955"/>
    <lineage>
        <taxon>Eukaryota</taxon>
        <taxon>Metazoa</taxon>
        <taxon>Chordata</taxon>
        <taxon>Craniata</taxon>
        <taxon>Vertebrata</taxon>
        <taxon>Euteleostomi</taxon>
        <taxon>Actinopterygii</taxon>
        <taxon>Neopterygii</taxon>
        <taxon>Teleostei</taxon>
        <taxon>Ostariophysi</taxon>
        <taxon>Cypriniformes</taxon>
        <taxon>Danionidae</taxon>
        <taxon>Danioninae</taxon>
        <taxon>Danio</taxon>
    </lineage>
</organism>
<name>ZNRF2_DANRE</name>
<protein>
    <recommendedName>
        <fullName>E3 ubiquitin-protein ligase znrf2</fullName>
        <ecNumber>2.3.2.27</ecNumber>
    </recommendedName>
    <alternativeName>
        <fullName>RING-type E3 ubiquitin transferase znrf2</fullName>
    </alternativeName>
    <alternativeName>
        <fullName>Zinc/RING finger protein 2</fullName>
    </alternativeName>
</protein>
<dbReference type="EC" id="2.3.2.27"/>
<dbReference type="EMBL" id="BC124159">
    <property type="protein sequence ID" value="AAI24160.1"/>
    <property type="molecule type" value="mRNA"/>
</dbReference>
<dbReference type="RefSeq" id="NP_001070196.1">
    <property type="nucleotide sequence ID" value="NM_001076728.1"/>
</dbReference>
<dbReference type="SMR" id="Q08CN9"/>
<dbReference type="FunCoup" id="Q08CN9">
    <property type="interactions" value="199"/>
</dbReference>
<dbReference type="STRING" id="7955.ENSDARP00000134291"/>
<dbReference type="PaxDb" id="7955-ENSDARP00000099393"/>
<dbReference type="Ensembl" id="ENSDART00000158047">
    <property type="protein sequence ID" value="ENSDARP00000134291"/>
    <property type="gene ID" value="ENSDARG00000098792"/>
</dbReference>
<dbReference type="GeneID" id="767761"/>
<dbReference type="KEGG" id="dre:767761"/>
<dbReference type="AGR" id="ZFIN:ZDB-GENE-060929-24"/>
<dbReference type="CTD" id="767761"/>
<dbReference type="ZFIN" id="ZDB-GENE-060929-24">
    <property type="gene designation" value="znrf2b"/>
</dbReference>
<dbReference type="eggNOG" id="KOG0801">
    <property type="taxonomic scope" value="Eukaryota"/>
</dbReference>
<dbReference type="InParanoid" id="Q08CN9"/>
<dbReference type="OMA" id="RGNDGHR"/>
<dbReference type="OrthoDB" id="10057496at2759"/>
<dbReference type="PhylomeDB" id="Q08CN9"/>
<dbReference type="Reactome" id="R-DRE-983168">
    <property type="pathway name" value="Antigen processing: Ubiquitination &amp; Proteasome degradation"/>
</dbReference>
<dbReference type="UniPathway" id="UPA00143"/>
<dbReference type="PRO" id="PR:Q08CN9"/>
<dbReference type="Proteomes" id="UP000000437">
    <property type="component" value="Chromosome 16"/>
</dbReference>
<dbReference type="Bgee" id="ENSDARG00000098792">
    <property type="expression patterns" value="Expressed in retina and 21 other cell types or tissues"/>
</dbReference>
<dbReference type="ExpressionAtlas" id="Q08CN9">
    <property type="expression patterns" value="baseline"/>
</dbReference>
<dbReference type="GO" id="GO:0042995">
    <property type="term" value="C:cell projection"/>
    <property type="evidence" value="ECO:0007669"/>
    <property type="project" value="UniProtKB-KW"/>
</dbReference>
<dbReference type="GO" id="GO:0005737">
    <property type="term" value="C:cytoplasm"/>
    <property type="evidence" value="ECO:0000318"/>
    <property type="project" value="GO_Central"/>
</dbReference>
<dbReference type="GO" id="GO:0010008">
    <property type="term" value="C:endosome membrane"/>
    <property type="evidence" value="ECO:0007669"/>
    <property type="project" value="UniProtKB-SubCell"/>
</dbReference>
<dbReference type="GO" id="GO:0043231">
    <property type="term" value="C:intracellular membrane-bounded organelle"/>
    <property type="evidence" value="ECO:0000318"/>
    <property type="project" value="GO_Central"/>
</dbReference>
<dbReference type="GO" id="GO:0005765">
    <property type="term" value="C:lysosomal membrane"/>
    <property type="evidence" value="ECO:0007669"/>
    <property type="project" value="UniProtKB-SubCell"/>
</dbReference>
<dbReference type="GO" id="GO:0016020">
    <property type="term" value="C:membrane"/>
    <property type="evidence" value="ECO:0000318"/>
    <property type="project" value="GO_Central"/>
</dbReference>
<dbReference type="GO" id="GO:0042734">
    <property type="term" value="C:presynaptic membrane"/>
    <property type="evidence" value="ECO:0007669"/>
    <property type="project" value="UniProtKB-SubCell"/>
</dbReference>
<dbReference type="GO" id="GO:0061630">
    <property type="term" value="F:ubiquitin protein ligase activity"/>
    <property type="evidence" value="ECO:0000318"/>
    <property type="project" value="GO_Central"/>
</dbReference>
<dbReference type="GO" id="GO:0008270">
    <property type="term" value="F:zinc ion binding"/>
    <property type="evidence" value="ECO:0007669"/>
    <property type="project" value="UniProtKB-KW"/>
</dbReference>
<dbReference type="GO" id="GO:0043161">
    <property type="term" value="P:proteasome-mediated ubiquitin-dependent protein catabolic process"/>
    <property type="evidence" value="ECO:0000318"/>
    <property type="project" value="GO_Central"/>
</dbReference>
<dbReference type="GO" id="GO:0070936">
    <property type="term" value="P:protein K48-linked ubiquitination"/>
    <property type="evidence" value="ECO:0000318"/>
    <property type="project" value="GO_Central"/>
</dbReference>
<dbReference type="CDD" id="cd16695">
    <property type="entry name" value="mRING-CH-C4HC2H_ZNRF2"/>
    <property type="match status" value="1"/>
</dbReference>
<dbReference type="FunFam" id="3.30.40.10:FF:000363">
    <property type="entry name" value="E3 ubiquitin-protein ligase ZNRF2"/>
    <property type="match status" value="1"/>
</dbReference>
<dbReference type="Gene3D" id="3.30.160.60">
    <property type="entry name" value="Classic Zinc Finger"/>
    <property type="match status" value="1"/>
</dbReference>
<dbReference type="Gene3D" id="3.30.40.10">
    <property type="entry name" value="Zinc/RING finger domain, C3HC4 (zinc finger)"/>
    <property type="match status" value="1"/>
</dbReference>
<dbReference type="InterPro" id="IPR001841">
    <property type="entry name" value="Znf_RING"/>
</dbReference>
<dbReference type="InterPro" id="IPR013083">
    <property type="entry name" value="Znf_RING/FYVE/PHD"/>
</dbReference>
<dbReference type="InterPro" id="IPR051878">
    <property type="entry name" value="ZNRF_ubiq-protein_ligase"/>
</dbReference>
<dbReference type="PANTHER" id="PTHR46661">
    <property type="entry name" value="E3 UBIQUITIN-PROTEIN LIGASE ZNRF1-LIKE PROTEIN"/>
    <property type="match status" value="1"/>
</dbReference>
<dbReference type="PANTHER" id="PTHR46661:SF3">
    <property type="entry name" value="E3 UBIQUITIN-PROTEIN LIGASE ZNRF2"/>
    <property type="match status" value="1"/>
</dbReference>
<dbReference type="Pfam" id="PF13639">
    <property type="entry name" value="zf-RING_2"/>
    <property type="match status" value="1"/>
</dbReference>
<dbReference type="SMART" id="SM00184">
    <property type="entry name" value="RING"/>
    <property type="match status" value="1"/>
</dbReference>
<dbReference type="SUPFAM" id="SSF57850">
    <property type="entry name" value="RING/U-box"/>
    <property type="match status" value="1"/>
</dbReference>
<dbReference type="PROSITE" id="PS50089">
    <property type="entry name" value="ZF_RING_2"/>
    <property type="match status" value="1"/>
</dbReference>
<sequence length="217" mass="22638">MGAKQSSPAANGRTRAYSGSDLPSATASVNGRTAAVLRYNNSQGASGATSAASASSSAAVASQFISSRTRSVGPSARPQSGINIPNSGAYSSADSGNSTPEEPGGERERSTGAPRLVIGSLPAHLSPHLFGGFKCPVCSKFISSDEMDLHLVMCLTKPRVTYNEDVLSKDAGECAICLEELLQGDTIARLPCLCIYHKGCIDEWFEVNRSCPEHPAD</sequence>
<proteinExistence type="evidence at transcript level"/>
<gene>
    <name type="primary">znrf2</name>
    <name type="ORF">zgc:152865</name>
</gene>
<keyword id="KW-1003">Cell membrane</keyword>
<keyword id="KW-0966">Cell projection</keyword>
<keyword id="KW-0967">Endosome</keyword>
<keyword id="KW-0449">Lipoprotein</keyword>
<keyword id="KW-0458">Lysosome</keyword>
<keyword id="KW-0472">Membrane</keyword>
<keyword id="KW-0479">Metal-binding</keyword>
<keyword id="KW-0519">Myristate</keyword>
<keyword id="KW-1185">Reference proteome</keyword>
<keyword id="KW-0770">Synapse</keyword>
<keyword id="KW-0808">Transferase</keyword>
<keyword id="KW-0833">Ubl conjugation pathway</keyword>
<keyword id="KW-0862">Zinc</keyword>
<keyword id="KW-0863">Zinc-finger</keyword>
<feature type="initiator methionine" description="Removed" evidence="3">
    <location>
        <position position="1"/>
    </location>
</feature>
<feature type="chain" id="PRO_0000277805" description="E3 ubiquitin-protein ligase znrf2">
    <location>
        <begin position="2"/>
        <end position="217"/>
    </location>
</feature>
<feature type="zinc finger region" description="RING-type; atypical" evidence="4">
    <location>
        <begin position="174"/>
        <end position="215"/>
    </location>
</feature>
<feature type="region of interest" description="Disordered" evidence="5">
    <location>
        <begin position="1"/>
        <end position="27"/>
    </location>
</feature>
<feature type="region of interest" description="Disordered" evidence="5">
    <location>
        <begin position="63"/>
        <end position="111"/>
    </location>
</feature>
<feature type="compositionally biased region" description="Polar residues" evidence="5">
    <location>
        <begin position="68"/>
        <end position="100"/>
    </location>
</feature>
<feature type="lipid moiety-binding region" description="N-myristoyl glycine" evidence="3">
    <location>
        <position position="2"/>
    </location>
</feature>
<reference key="1">
    <citation type="submission" date="2006-09" db="EMBL/GenBank/DDBJ databases">
        <authorList>
            <consortium name="NIH - Zebrafish Gene Collection (ZGC) project"/>
        </authorList>
    </citation>
    <scope>NUCLEOTIDE SEQUENCE [LARGE SCALE MRNA]</scope>
    <source>
        <strain>AB</strain>
    </source>
</reference>
<accession>Q08CN9</accession>
<evidence type="ECO:0000250" key="1"/>
<evidence type="ECO:0000250" key="2">
    <source>
        <dbReference type="UniProtKB" id="Q8NHG8"/>
    </source>
</evidence>
<evidence type="ECO:0000255" key="3"/>
<evidence type="ECO:0000255" key="4">
    <source>
        <dbReference type="PROSITE-ProRule" id="PRU00175"/>
    </source>
</evidence>
<evidence type="ECO:0000256" key="5">
    <source>
        <dbReference type="SAM" id="MobiDB-lite"/>
    </source>
</evidence>
<comment type="function">
    <text evidence="1">May play a role in the establishment and maintenance of neuronal transmission and plasticity via its ubiquitin ligase activity. E3 ubiquitin ligases accept ubiquitin from an E2 ubiquitin-conjugating enzyme in the form of a thioester and then directly transfer the ubiquitin to targeted substrates.</text>
</comment>
<comment type="catalytic activity">
    <reaction>
        <text>S-ubiquitinyl-[E2 ubiquitin-conjugating enzyme]-L-cysteine + [acceptor protein]-L-lysine = [E2 ubiquitin-conjugating enzyme]-L-cysteine + N(6)-ubiquitinyl-[acceptor protein]-L-lysine.</text>
        <dbReference type="EC" id="2.3.2.27"/>
    </reaction>
</comment>
<comment type="pathway">
    <text>Protein modification; protein ubiquitination.</text>
</comment>
<comment type="subcellular location">
    <subcellularLocation>
        <location evidence="2">Endosome membrane</location>
        <topology evidence="2">Peripheral membrane protein</topology>
    </subcellularLocation>
    <subcellularLocation>
        <location evidence="2">Lysosome membrane</location>
        <topology evidence="2">Peripheral membrane protein</topology>
    </subcellularLocation>
    <subcellularLocation>
        <location evidence="2">Presynaptic cell membrane</location>
        <topology evidence="2">Peripheral membrane protein</topology>
    </subcellularLocation>
</comment>